<keyword id="KW-0547">Nucleotide-binding</keyword>
<keyword id="KW-1185">Reference proteome</keyword>
<keyword id="KW-0677">Repeat</keyword>
<keyword id="KW-0694">RNA-binding</keyword>
<feature type="chain" id="PRO_0000363430" description="Pentatricopeptide repeat-containing protein At4g14850">
    <location>
        <begin position="1"/>
        <end position="684"/>
    </location>
</feature>
<feature type="repeat" description="PPR 1">
    <location>
        <begin position="5"/>
        <end position="39"/>
    </location>
</feature>
<feature type="repeat" description="PPR 2">
    <location>
        <begin position="41"/>
        <end position="71"/>
    </location>
</feature>
<feature type="repeat" description="PPR 3">
    <location>
        <begin position="72"/>
        <end position="106"/>
    </location>
</feature>
<feature type="repeat" description="PPR 4">
    <location>
        <begin position="107"/>
        <end position="141"/>
    </location>
</feature>
<feature type="repeat" description="PPR 5">
    <location>
        <begin position="142"/>
        <end position="172"/>
    </location>
</feature>
<feature type="repeat" description="PPR 6">
    <location>
        <begin position="173"/>
        <end position="207"/>
    </location>
</feature>
<feature type="repeat" description="PPR 7">
    <location>
        <begin position="208"/>
        <end position="242"/>
    </location>
</feature>
<feature type="repeat" description="PPR 8">
    <location>
        <begin position="243"/>
        <end position="277"/>
    </location>
</feature>
<feature type="repeat" description="PPR 9">
    <location>
        <begin position="278"/>
        <end position="308"/>
    </location>
</feature>
<feature type="repeat" description="PPR 10">
    <location>
        <begin position="309"/>
        <end position="343"/>
    </location>
</feature>
<feature type="repeat" description="PPR 11">
    <location>
        <begin position="344"/>
        <end position="374"/>
    </location>
</feature>
<feature type="repeat" description="PPR 12">
    <location>
        <begin position="375"/>
        <end position="409"/>
    </location>
</feature>
<feature type="repeat" description="PPR 13">
    <location>
        <begin position="412"/>
        <end position="442"/>
    </location>
</feature>
<feature type="repeat" description="PPR 14">
    <location>
        <begin position="448"/>
        <end position="478"/>
    </location>
</feature>
<feature type="region of interest" description="Type E motif; degenerate">
    <location>
        <begin position="483"/>
        <end position="558"/>
    </location>
</feature>
<feature type="region of interest" description="Type E(+) motif; degenerate">
    <location>
        <begin position="559"/>
        <end position="589"/>
    </location>
</feature>
<feature type="region of interest" description="Type DYW motif">
    <location>
        <begin position="590"/>
        <end position="684"/>
    </location>
</feature>
<dbReference type="EMBL" id="Z97337">
    <property type="protein sequence ID" value="CAB10264.1"/>
    <property type="status" value="ALT_SEQ"/>
    <property type="molecule type" value="Genomic_DNA"/>
</dbReference>
<dbReference type="EMBL" id="AL161540">
    <property type="protein sequence ID" value="CAB78527.1"/>
    <property type="status" value="ALT_SEQ"/>
    <property type="molecule type" value="Genomic_DNA"/>
</dbReference>
<dbReference type="EMBL" id="CP002687">
    <property type="protein sequence ID" value="AEE83509.1"/>
    <property type="molecule type" value="Genomic_DNA"/>
</dbReference>
<dbReference type="EMBL" id="AK227954">
    <property type="protein sequence ID" value="BAE99922.1"/>
    <property type="molecule type" value="mRNA"/>
</dbReference>
<dbReference type="EMBL" id="BT010464">
    <property type="protein sequence ID" value="AAQ65087.1"/>
    <property type="molecule type" value="mRNA"/>
</dbReference>
<dbReference type="PIR" id="F71411">
    <property type="entry name" value="F71411"/>
</dbReference>
<dbReference type="RefSeq" id="NP_193221.3">
    <property type="nucleotide sequence ID" value="NM_117571.5"/>
</dbReference>
<dbReference type="SMR" id="Q0WSH6"/>
<dbReference type="FunCoup" id="Q0WSH6">
    <property type="interactions" value="230"/>
</dbReference>
<dbReference type="STRING" id="3702.Q0WSH6"/>
<dbReference type="GlyGen" id="Q0WSH6">
    <property type="glycosylation" value="1 site"/>
</dbReference>
<dbReference type="iPTMnet" id="Q0WSH6"/>
<dbReference type="PaxDb" id="3702-AT4G14850.1"/>
<dbReference type="ProteomicsDB" id="249221"/>
<dbReference type="EnsemblPlants" id="AT4G14850.1">
    <property type="protein sequence ID" value="AT4G14850.1"/>
    <property type="gene ID" value="AT4G14850"/>
</dbReference>
<dbReference type="GeneID" id="827142"/>
<dbReference type="Gramene" id="AT4G14850.1">
    <property type="protein sequence ID" value="AT4G14850.1"/>
    <property type="gene ID" value="AT4G14850"/>
</dbReference>
<dbReference type="KEGG" id="ath:AT4G14850"/>
<dbReference type="Araport" id="AT4G14850"/>
<dbReference type="TAIR" id="AT4G14850">
    <property type="gene designation" value="LOI1"/>
</dbReference>
<dbReference type="eggNOG" id="KOG4197">
    <property type="taxonomic scope" value="Eukaryota"/>
</dbReference>
<dbReference type="HOGENOM" id="CLU_002706_37_2_1"/>
<dbReference type="InParanoid" id="Q0WSH6"/>
<dbReference type="OMA" id="WNACISN"/>
<dbReference type="PhylomeDB" id="Q0WSH6"/>
<dbReference type="PRO" id="PR:Q0WSH6"/>
<dbReference type="Proteomes" id="UP000006548">
    <property type="component" value="Chromosome 4"/>
</dbReference>
<dbReference type="ExpressionAtlas" id="Q0WSH6">
    <property type="expression patterns" value="baseline and differential"/>
</dbReference>
<dbReference type="GO" id="GO:0005739">
    <property type="term" value="C:mitochondrion"/>
    <property type="evidence" value="ECO:0000314"/>
    <property type="project" value="TAIR"/>
</dbReference>
<dbReference type="GO" id="GO:0003729">
    <property type="term" value="F:mRNA binding"/>
    <property type="evidence" value="ECO:0000314"/>
    <property type="project" value="TAIR"/>
</dbReference>
<dbReference type="GO" id="GO:0000166">
    <property type="term" value="F:nucleotide binding"/>
    <property type="evidence" value="ECO:0007669"/>
    <property type="project" value="UniProtKB-KW"/>
</dbReference>
<dbReference type="GO" id="GO:0034046">
    <property type="term" value="F:poly(G) binding"/>
    <property type="evidence" value="ECO:0000314"/>
    <property type="project" value="TAIR"/>
</dbReference>
<dbReference type="GO" id="GO:0008270">
    <property type="term" value="F:zinc ion binding"/>
    <property type="evidence" value="ECO:0007669"/>
    <property type="project" value="InterPro"/>
</dbReference>
<dbReference type="GO" id="GO:0019288">
    <property type="term" value="P:isopentenyl diphosphate biosynthetic process, methylerythritol 4-phosphate pathway"/>
    <property type="evidence" value="ECO:0000315"/>
    <property type="project" value="TAIR"/>
</dbReference>
<dbReference type="GO" id="GO:0019287">
    <property type="term" value="P:isopentenyl diphosphate biosynthetic process, mevalonate pathway"/>
    <property type="evidence" value="ECO:0000315"/>
    <property type="project" value="TAIR"/>
</dbReference>
<dbReference type="GO" id="GO:0050790">
    <property type="term" value="P:regulation of catalytic activity"/>
    <property type="evidence" value="ECO:0000315"/>
    <property type="project" value="TAIR"/>
</dbReference>
<dbReference type="GO" id="GO:0009451">
    <property type="term" value="P:RNA modification"/>
    <property type="evidence" value="ECO:0007669"/>
    <property type="project" value="InterPro"/>
</dbReference>
<dbReference type="GO" id="GO:0048364">
    <property type="term" value="P:root development"/>
    <property type="evidence" value="ECO:0000315"/>
    <property type="project" value="TAIR"/>
</dbReference>
<dbReference type="GO" id="GO:0016125">
    <property type="term" value="P:sterol metabolic process"/>
    <property type="evidence" value="ECO:0000315"/>
    <property type="project" value="TAIR"/>
</dbReference>
<dbReference type="FunFam" id="1.25.40.10:FF:000681">
    <property type="entry name" value="Pentatricopeptide repeat-containing protein"/>
    <property type="match status" value="1"/>
</dbReference>
<dbReference type="FunFam" id="1.25.40.10:FF:001211">
    <property type="entry name" value="Pentatricopeptide repeat-containing protein"/>
    <property type="match status" value="1"/>
</dbReference>
<dbReference type="FunFam" id="1.25.40.10:FF:000196">
    <property type="entry name" value="Pentatricopeptide repeat-containing protein At4g14850"/>
    <property type="match status" value="2"/>
</dbReference>
<dbReference type="FunFam" id="1.25.40.10:FF:000668">
    <property type="entry name" value="Pentatricopeptide repeat-containing protein, mitochondrial"/>
    <property type="match status" value="1"/>
</dbReference>
<dbReference type="Gene3D" id="1.25.40.10">
    <property type="entry name" value="Tetratricopeptide repeat domain"/>
    <property type="match status" value="5"/>
</dbReference>
<dbReference type="InterPro" id="IPR032867">
    <property type="entry name" value="DYW_dom"/>
</dbReference>
<dbReference type="InterPro" id="IPR046848">
    <property type="entry name" value="E_motif"/>
</dbReference>
<dbReference type="InterPro" id="IPR002885">
    <property type="entry name" value="Pentatricopeptide_rpt"/>
</dbReference>
<dbReference type="InterPro" id="IPR046960">
    <property type="entry name" value="PPR_At4g14850-like_plant"/>
</dbReference>
<dbReference type="InterPro" id="IPR011990">
    <property type="entry name" value="TPR-like_helical_dom_sf"/>
</dbReference>
<dbReference type="NCBIfam" id="TIGR00756">
    <property type="entry name" value="PPR"/>
    <property type="match status" value="3"/>
</dbReference>
<dbReference type="PANTHER" id="PTHR24015">
    <property type="entry name" value="OS07G0578800 PROTEIN-RELATED"/>
    <property type="match status" value="1"/>
</dbReference>
<dbReference type="Pfam" id="PF14432">
    <property type="entry name" value="DYW_deaminase"/>
    <property type="match status" value="1"/>
</dbReference>
<dbReference type="Pfam" id="PF20431">
    <property type="entry name" value="E_motif"/>
    <property type="match status" value="1"/>
</dbReference>
<dbReference type="Pfam" id="PF01535">
    <property type="entry name" value="PPR"/>
    <property type="match status" value="3"/>
</dbReference>
<dbReference type="Pfam" id="PF13041">
    <property type="entry name" value="PPR_2"/>
    <property type="match status" value="2"/>
</dbReference>
<dbReference type="PROSITE" id="PS51375">
    <property type="entry name" value="PPR"/>
    <property type="match status" value="10"/>
</dbReference>
<comment type="function">
    <text evidence="1">Acts as a regulatory factor of isoprenoid biosynthesis. Could bind RNA.</text>
</comment>
<comment type="similarity">
    <text evidence="2">Belongs to the PPR family. PCMP-H subfamily.</text>
</comment>
<comment type="sequence caution" evidence="2">
    <conflict type="erroneous gene model prediction">
        <sequence resource="EMBL-CDS" id="CAB10264"/>
    </conflict>
</comment>
<comment type="sequence caution" evidence="2">
    <conflict type="erroneous gene model prediction">
        <sequence resource="EMBL-CDS" id="CAB78527"/>
    </conflict>
</comment>
<comment type="online information" name="Pentatricopeptide repeat proteins">
    <link uri="https://ppr.plantenergy.uwa.edu.au"/>
</comment>
<name>PP312_ARATH</name>
<sequence>MSLLSADALGLLLKNAISASSMRLGRVVHARIVKTLDSPPPPFLANYLINMYSKLDHPESARLVLRLTPARNVVSWTSLISGLAQNGHFSTALVEFFEMRREGVVPNDFTFPCAFKAVASLRLPVTGKQIHALAVKCGRILDVFVGCSAFDMYCKTRLRDDARKLFDEIPERNLETWNAFISNSVTDGRPREAIEAFIEFRRIDGHPNSITFCAFLNACSDWLHLNLGMQLHGLVLRSGFDTDVSVCNGLIDFYGKCKQIRSSEIIFTEMGTKNAVSWCSLVAAYVQNHEDEKASVLYLRSRKDIVETSDFMISSVLSACAGMAGLELGRSIHAHAVKACVERTIFVGSALVDMYGKCGCIEDSEQAFDEMPEKNLVTRNSLIGGYAHQGQVDMALALFEEMAPRGCGPTPNYMTFVSLLSACSRAGAVENGMKIFDSMRSTYGIEPGAEHYSCIVDMLGRAGMVERAYEFIKKMPIQPTISVWGALQNACRMHGKPQLGLLAAENLFKLDPKDSGNHVLLSNTFAAAGRWAEANTVREELKGVGIKKGAGYSWITVKNQVHAFQAKDRSHILNKEIQTTLAKLRNEMEAAGYKPDLKLSLYDLEEEEKAAEVSHHSEKLALAFGLLSLPLSVPIRITKNLRICGDCHSFFKFVSGSVKREIIVRDNNRFHRFKDGICSCKDYW</sequence>
<proteinExistence type="evidence at protein level"/>
<protein>
    <recommendedName>
        <fullName>Pentatricopeptide repeat-containing protein At4g14850</fullName>
    </recommendedName>
    <alternativeName>
        <fullName>Protein LOVASTATIN INSENSITIVE 1</fullName>
    </alternativeName>
</protein>
<accession>Q0WSH6</accession>
<accession>O23340</accession>
<accession>Q6NQI9</accession>
<organism>
    <name type="scientific">Arabidopsis thaliana</name>
    <name type="common">Mouse-ear cress</name>
    <dbReference type="NCBI Taxonomy" id="3702"/>
    <lineage>
        <taxon>Eukaryota</taxon>
        <taxon>Viridiplantae</taxon>
        <taxon>Streptophyta</taxon>
        <taxon>Embryophyta</taxon>
        <taxon>Tracheophyta</taxon>
        <taxon>Spermatophyta</taxon>
        <taxon>Magnoliopsida</taxon>
        <taxon>eudicotyledons</taxon>
        <taxon>Gunneridae</taxon>
        <taxon>Pentapetalae</taxon>
        <taxon>rosids</taxon>
        <taxon>malvids</taxon>
        <taxon>Brassicales</taxon>
        <taxon>Brassicaceae</taxon>
        <taxon>Camelineae</taxon>
        <taxon>Arabidopsis</taxon>
    </lineage>
</organism>
<evidence type="ECO:0000269" key="1">
    <source>
    </source>
</evidence>
<evidence type="ECO:0000305" key="2"/>
<reference key="1">
    <citation type="journal article" date="1998" name="Nature">
        <title>Analysis of 1.9 Mb of contiguous sequence from chromosome 4 of Arabidopsis thaliana.</title>
        <authorList>
            <person name="Bevan M."/>
            <person name="Bancroft I."/>
            <person name="Bent E."/>
            <person name="Love K."/>
            <person name="Goodman H.M."/>
            <person name="Dean C."/>
            <person name="Bergkamp R."/>
            <person name="Dirkse W."/>
            <person name="van Staveren M."/>
            <person name="Stiekema W."/>
            <person name="Drost L."/>
            <person name="Ridley P."/>
            <person name="Hudson S.-A."/>
            <person name="Patel K."/>
            <person name="Murphy G."/>
            <person name="Piffanelli P."/>
            <person name="Wedler H."/>
            <person name="Wedler E."/>
            <person name="Wambutt R."/>
            <person name="Weitzenegger T."/>
            <person name="Pohl T."/>
            <person name="Terryn N."/>
            <person name="Gielen J."/>
            <person name="Villarroel R."/>
            <person name="De Clercq R."/>
            <person name="van Montagu M."/>
            <person name="Lecharny A."/>
            <person name="Aubourg S."/>
            <person name="Gy I."/>
            <person name="Kreis M."/>
            <person name="Lao N."/>
            <person name="Kavanagh T."/>
            <person name="Hempel S."/>
            <person name="Kotter P."/>
            <person name="Entian K.-D."/>
            <person name="Rieger M."/>
            <person name="Schaefer M."/>
            <person name="Funk B."/>
            <person name="Mueller-Auer S."/>
            <person name="Silvey M."/>
            <person name="James R."/>
            <person name="Monfort A."/>
            <person name="Pons A."/>
            <person name="Puigdomenech P."/>
            <person name="Douka A."/>
            <person name="Voukelatou E."/>
            <person name="Milioni D."/>
            <person name="Hatzopoulos P."/>
            <person name="Piravandi E."/>
            <person name="Obermaier B."/>
            <person name="Hilbert H."/>
            <person name="Duesterhoeft A."/>
            <person name="Moores T."/>
            <person name="Jones J.D.G."/>
            <person name="Eneva T."/>
            <person name="Palme K."/>
            <person name="Benes V."/>
            <person name="Rechmann S."/>
            <person name="Ansorge W."/>
            <person name="Cooke R."/>
            <person name="Berger C."/>
            <person name="Delseny M."/>
            <person name="Voet M."/>
            <person name="Volckaert G."/>
            <person name="Mewes H.-W."/>
            <person name="Klosterman S."/>
            <person name="Schueller C."/>
            <person name="Chalwatzis N."/>
        </authorList>
    </citation>
    <scope>NUCLEOTIDE SEQUENCE [LARGE SCALE GENOMIC DNA]</scope>
    <source>
        <strain>cv. Columbia</strain>
    </source>
</reference>
<reference key="2">
    <citation type="journal article" date="1999" name="Nature">
        <title>Sequence and analysis of chromosome 4 of the plant Arabidopsis thaliana.</title>
        <authorList>
            <person name="Mayer K.F.X."/>
            <person name="Schueller C."/>
            <person name="Wambutt R."/>
            <person name="Murphy G."/>
            <person name="Volckaert G."/>
            <person name="Pohl T."/>
            <person name="Duesterhoeft A."/>
            <person name="Stiekema W."/>
            <person name="Entian K.-D."/>
            <person name="Terryn N."/>
            <person name="Harris B."/>
            <person name="Ansorge W."/>
            <person name="Brandt P."/>
            <person name="Grivell L.A."/>
            <person name="Rieger M."/>
            <person name="Weichselgartner M."/>
            <person name="de Simone V."/>
            <person name="Obermaier B."/>
            <person name="Mache R."/>
            <person name="Mueller M."/>
            <person name="Kreis M."/>
            <person name="Delseny M."/>
            <person name="Puigdomenech P."/>
            <person name="Watson M."/>
            <person name="Schmidtheini T."/>
            <person name="Reichert B."/>
            <person name="Portetelle D."/>
            <person name="Perez-Alonso M."/>
            <person name="Boutry M."/>
            <person name="Bancroft I."/>
            <person name="Vos P."/>
            <person name="Hoheisel J."/>
            <person name="Zimmermann W."/>
            <person name="Wedler H."/>
            <person name="Ridley P."/>
            <person name="Langham S.-A."/>
            <person name="McCullagh B."/>
            <person name="Bilham L."/>
            <person name="Robben J."/>
            <person name="van der Schueren J."/>
            <person name="Grymonprez B."/>
            <person name="Chuang Y.-J."/>
            <person name="Vandenbussche F."/>
            <person name="Braeken M."/>
            <person name="Weltjens I."/>
            <person name="Voet M."/>
            <person name="Bastiaens I."/>
            <person name="Aert R."/>
            <person name="Defoor E."/>
            <person name="Weitzenegger T."/>
            <person name="Bothe G."/>
            <person name="Ramsperger U."/>
            <person name="Hilbert H."/>
            <person name="Braun M."/>
            <person name="Holzer E."/>
            <person name="Brandt A."/>
            <person name="Peters S."/>
            <person name="van Staveren M."/>
            <person name="Dirkse W."/>
            <person name="Mooijman P."/>
            <person name="Klein Lankhorst R."/>
            <person name="Rose M."/>
            <person name="Hauf J."/>
            <person name="Koetter P."/>
            <person name="Berneiser S."/>
            <person name="Hempel S."/>
            <person name="Feldpausch M."/>
            <person name="Lamberth S."/>
            <person name="Van den Daele H."/>
            <person name="De Keyser A."/>
            <person name="Buysshaert C."/>
            <person name="Gielen J."/>
            <person name="Villarroel R."/>
            <person name="De Clercq R."/>
            <person name="van Montagu M."/>
            <person name="Rogers J."/>
            <person name="Cronin A."/>
            <person name="Quail M.A."/>
            <person name="Bray-Allen S."/>
            <person name="Clark L."/>
            <person name="Doggett J."/>
            <person name="Hall S."/>
            <person name="Kay M."/>
            <person name="Lennard N."/>
            <person name="McLay K."/>
            <person name="Mayes R."/>
            <person name="Pettett A."/>
            <person name="Rajandream M.A."/>
            <person name="Lyne M."/>
            <person name="Benes V."/>
            <person name="Rechmann S."/>
            <person name="Borkova D."/>
            <person name="Bloecker H."/>
            <person name="Scharfe M."/>
            <person name="Grimm M."/>
            <person name="Loehnert T.-H."/>
            <person name="Dose S."/>
            <person name="de Haan M."/>
            <person name="Maarse A.C."/>
            <person name="Schaefer M."/>
            <person name="Mueller-Auer S."/>
            <person name="Gabel C."/>
            <person name="Fuchs M."/>
            <person name="Fartmann B."/>
            <person name="Granderath K."/>
            <person name="Dauner D."/>
            <person name="Herzl A."/>
            <person name="Neumann S."/>
            <person name="Argiriou A."/>
            <person name="Vitale D."/>
            <person name="Liguori R."/>
            <person name="Piravandi E."/>
            <person name="Massenet O."/>
            <person name="Quigley F."/>
            <person name="Clabauld G."/>
            <person name="Muendlein A."/>
            <person name="Felber R."/>
            <person name="Schnabl S."/>
            <person name="Hiller R."/>
            <person name="Schmidt W."/>
            <person name="Lecharny A."/>
            <person name="Aubourg S."/>
            <person name="Chefdor F."/>
            <person name="Cooke R."/>
            <person name="Berger C."/>
            <person name="Monfort A."/>
            <person name="Casacuberta E."/>
            <person name="Gibbons T."/>
            <person name="Weber N."/>
            <person name="Vandenbol M."/>
            <person name="Bargues M."/>
            <person name="Terol J."/>
            <person name="Torres A."/>
            <person name="Perez-Perez A."/>
            <person name="Purnelle B."/>
            <person name="Bent E."/>
            <person name="Johnson S."/>
            <person name="Tacon D."/>
            <person name="Jesse T."/>
            <person name="Heijnen L."/>
            <person name="Schwarz S."/>
            <person name="Scholler P."/>
            <person name="Heber S."/>
            <person name="Francs P."/>
            <person name="Bielke C."/>
            <person name="Frishman D."/>
            <person name="Haase D."/>
            <person name="Lemcke K."/>
            <person name="Mewes H.-W."/>
            <person name="Stocker S."/>
            <person name="Zaccaria P."/>
            <person name="Bevan M."/>
            <person name="Wilson R.K."/>
            <person name="de la Bastide M."/>
            <person name="Habermann K."/>
            <person name="Parnell L."/>
            <person name="Dedhia N."/>
            <person name="Gnoj L."/>
            <person name="Schutz K."/>
            <person name="Huang E."/>
            <person name="Spiegel L."/>
            <person name="Sekhon M."/>
            <person name="Murray J."/>
            <person name="Sheet P."/>
            <person name="Cordes M."/>
            <person name="Abu-Threideh J."/>
            <person name="Stoneking T."/>
            <person name="Kalicki J."/>
            <person name="Graves T."/>
            <person name="Harmon G."/>
            <person name="Edwards J."/>
            <person name="Latreille P."/>
            <person name="Courtney L."/>
            <person name="Cloud J."/>
            <person name="Abbott A."/>
            <person name="Scott K."/>
            <person name="Johnson D."/>
            <person name="Minx P."/>
            <person name="Bentley D."/>
            <person name="Fulton B."/>
            <person name="Miller N."/>
            <person name="Greco T."/>
            <person name="Kemp K."/>
            <person name="Kramer J."/>
            <person name="Fulton L."/>
            <person name="Mardis E."/>
            <person name="Dante M."/>
            <person name="Pepin K."/>
            <person name="Hillier L.W."/>
            <person name="Nelson J."/>
            <person name="Spieth J."/>
            <person name="Ryan E."/>
            <person name="Andrews S."/>
            <person name="Geisel C."/>
            <person name="Layman D."/>
            <person name="Du H."/>
            <person name="Ali J."/>
            <person name="Berghoff A."/>
            <person name="Jones K."/>
            <person name="Drone K."/>
            <person name="Cotton M."/>
            <person name="Joshu C."/>
            <person name="Antonoiu B."/>
            <person name="Zidanic M."/>
            <person name="Strong C."/>
            <person name="Sun H."/>
            <person name="Lamar B."/>
            <person name="Yordan C."/>
            <person name="Ma P."/>
            <person name="Zhong J."/>
            <person name="Preston R."/>
            <person name="Vil D."/>
            <person name="Shekher M."/>
            <person name="Matero A."/>
            <person name="Shah R."/>
            <person name="Swaby I.K."/>
            <person name="O'Shaughnessy A."/>
            <person name="Rodriguez M."/>
            <person name="Hoffman J."/>
            <person name="Till S."/>
            <person name="Granat S."/>
            <person name="Shohdy N."/>
            <person name="Hasegawa A."/>
            <person name="Hameed A."/>
            <person name="Lodhi M."/>
            <person name="Johnson A."/>
            <person name="Chen E."/>
            <person name="Marra M.A."/>
            <person name="Martienssen R."/>
            <person name="McCombie W.R."/>
        </authorList>
    </citation>
    <scope>NUCLEOTIDE SEQUENCE [LARGE SCALE GENOMIC DNA]</scope>
    <source>
        <strain>cv. Columbia</strain>
    </source>
</reference>
<reference key="3">
    <citation type="journal article" date="2017" name="Plant J.">
        <title>Araport11: a complete reannotation of the Arabidopsis thaliana reference genome.</title>
        <authorList>
            <person name="Cheng C.Y."/>
            <person name="Krishnakumar V."/>
            <person name="Chan A.P."/>
            <person name="Thibaud-Nissen F."/>
            <person name="Schobel S."/>
            <person name="Town C.D."/>
        </authorList>
    </citation>
    <scope>GENOME REANNOTATION</scope>
    <source>
        <strain>cv. Columbia</strain>
    </source>
</reference>
<reference key="4">
    <citation type="submission" date="2006-07" db="EMBL/GenBank/DDBJ databases">
        <title>Large-scale analysis of RIKEN Arabidopsis full-length (RAFL) cDNAs.</title>
        <authorList>
            <person name="Totoki Y."/>
            <person name="Seki M."/>
            <person name="Ishida J."/>
            <person name="Nakajima M."/>
            <person name="Enju A."/>
            <person name="Kamiya A."/>
            <person name="Narusaka M."/>
            <person name="Shin-i T."/>
            <person name="Nakagawa M."/>
            <person name="Sakamoto N."/>
            <person name="Oishi K."/>
            <person name="Kohara Y."/>
            <person name="Kobayashi M."/>
            <person name="Toyoda A."/>
            <person name="Sakaki Y."/>
            <person name="Sakurai T."/>
            <person name="Iida K."/>
            <person name="Akiyama K."/>
            <person name="Satou M."/>
            <person name="Toyoda T."/>
            <person name="Konagaya A."/>
            <person name="Carninci P."/>
            <person name="Kawai J."/>
            <person name="Hayashizaki Y."/>
            <person name="Shinozaki K."/>
        </authorList>
    </citation>
    <scope>NUCLEOTIDE SEQUENCE [LARGE SCALE MRNA]</scope>
    <source>
        <strain>cv. Columbia</strain>
    </source>
</reference>
<reference key="5">
    <citation type="journal article" date="2003" name="Science">
        <title>Empirical analysis of transcriptional activity in the Arabidopsis genome.</title>
        <authorList>
            <person name="Yamada K."/>
            <person name="Lim J."/>
            <person name="Dale J.M."/>
            <person name="Chen H."/>
            <person name="Shinn P."/>
            <person name="Palm C.J."/>
            <person name="Southwick A.M."/>
            <person name="Wu H.C."/>
            <person name="Kim C.J."/>
            <person name="Nguyen M."/>
            <person name="Pham P.K."/>
            <person name="Cheuk R.F."/>
            <person name="Karlin-Newmann G."/>
            <person name="Liu S.X."/>
            <person name="Lam B."/>
            <person name="Sakano H."/>
            <person name="Wu T."/>
            <person name="Yu G."/>
            <person name="Miranda M."/>
            <person name="Quach H.L."/>
            <person name="Tripp M."/>
            <person name="Chang C.H."/>
            <person name="Lee J.M."/>
            <person name="Toriumi M.J."/>
            <person name="Chan M.M."/>
            <person name="Tang C.C."/>
            <person name="Onodera C.S."/>
            <person name="Deng J.M."/>
            <person name="Akiyama K."/>
            <person name="Ansari Y."/>
            <person name="Arakawa T."/>
            <person name="Banh J."/>
            <person name="Banno F."/>
            <person name="Bowser L."/>
            <person name="Brooks S.Y."/>
            <person name="Carninci P."/>
            <person name="Chao Q."/>
            <person name="Choy N."/>
            <person name="Enju A."/>
            <person name="Goldsmith A.D."/>
            <person name="Gurjal M."/>
            <person name="Hansen N.F."/>
            <person name="Hayashizaki Y."/>
            <person name="Johnson-Hopson C."/>
            <person name="Hsuan V.W."/>
            <person name="Iida K."/>
            <person name="Karnes M."/>
            <person name="Khan S."/>
            <person name="Koesema E."/>
            <person name="Ishida J."/>
            <person name="Jiang P.X."/>
            <person name="Jones T."/>
            <person name="Kawai J."/>
            <person name="Kamiya A."/>
            <person name="Meyers C."/>
            <person name="Nakajima M."/>
            <person name="Narusaka M."/>
            <person name="Seki M."/>
            <person name="Sakurai T."/>
            <person name="Satou M."/>
            <person name="Tamse R."/>
            <person name="Vaysberg M."/>
            <person name="Wallender E.K."/>
            <person name="Wong C."/>
            <person name="Yamamura Y."/>
            <person name="Yuan S."/>
            <person name="Shinozaki K."/>
            <person name="Davis R.W."/>
            <person name="Theologis A."/>
            <person name="Ecker J.R."/>
        </authorList>
    </citation>
    <scope>NUCLEOTIDE SEQUENCE [LARGE SCALE MRNA] OF 51-684</scope>
    <source>
        <strain>cv. Columbia</strain>
    </source>
</reference>
<reference key="6">
    <citation type="journal article" date="2000" name="Plant Mol. Biol.">
        <title>In Arabidopsis thaliana, 1% of the genome codes for a novel protein family unique to plants.</title>
        <authorList>
            <person name="Aubourg S."/>
            <person name="Boudet N."/>
            <person name="Kreis M."/>
            <person name="Lecharny A."/>
        </authorList>
    </citation>
    <scope>GENE FAMILY</scope>
</reference>
<reference key="7">
    <citation type="journal article" date="2004" name="Plant Cell">
        <title>Genome-wide analysis of Arabidopsis pentatricopeptide repeat proteins reveals their essential role in organelle biogenesis.</title>
        <authorList>
            <person name="Lurin C."/>
            <person name="Andres C."/>
            <person name="Aubourg S."/>
            <person name="Bellaoui M."/>
            <person name="Bitton F."/>
            <person name="Bruyere C."/>
            <person name="Caboche M."/>
            <person name="Debast C."/>
            <person name="Gualberto J."/>
            <person name="Hoffmann B."/>
            <person name="Lecharny A."/>
            <person name="Le Ret M."/>
            <person name="Martin-Magniette M.-L."/>
            <person name="Mireau H."/>
            <person name="Peeters N."/>
            <person name="Renou J.-P."/>
            <person name="Szurek B."/>
            <person name="Taconnat L."/>
            <person name="Small I."/>
        </authorList>
    </citation>
    <scope>GENE FAMILY</scope>
</reference>
<reference key="8">
    <citation type="journal article" date="2007" name="Plant Cell Physiol.">
        <title>LOVASTATIN INSENSITIVE 1, a novel pentatricopeptide repeat protein, is a potential regulatory factor of isoprenoid biosynthesis in Arabidopsis.</title>
        <authorList>
            <person name="Kobayashi K."/>
            <person name="Suzuki M."/>
            <person name="Tang J."/>
            <person name="Nagata N."/>
            <person name="Ohyama K."/>
            <person name="Seki H."/>
            <person name="Kiuchi R."/>
            <person name="Kaneko Y."/>
            <person name="Nakazawa M."/>
            <person name="Matsui M."/>
            <person name="Matsumoto S."/>
            <person name="Yoshida S."/>
            <person name="Muranaka T."/>
        </authorList>
    </citation>
    <scope>FUNCTION</scope>
    <scope>RNA-BINDING</scope>
</reference>
<gene>
    <name type="primary">LOI1</name>
    <name type="synonym">PCMP-H4</name>
    <name type="ordered locus">At4g14850</name>
    <name type="ORF">dl3465w</name>
    <name type="ORF">FCAALL.335</name>
</gene>